<organism>
    <name type="scientific">Rattus norvegicus</name>
    <name type="common">Rat</name>
    <dbReference type="NCBI Taxonomy" id="10116"/>
    <lineage>
        <taxon>Eukaryota</taxon>
        <taxon>Metazoa</taxon>
        <taxon>Chordata</taxon>
        <taxon>Craniata</taxon>
        <taxon>Vertebrata</taxon>
        <taxon>Euteleostomi</taxon>
        <taxon>Mammalia</taxon>
        <taxon>Eutheria</taxon>
        <taxon>Euarchontoglires</taxon>
        <taxon>Glires</taxon>
        <taxon>Rodentia</taxon>
        <taxon>Myomorpha</taxon>
        <taxon>Muroidea</taxon>
        <taxon>Muridae</taxon>
        <taxon>Murinae</taxon>
        <taxon>Rattus</taxon>
    </lineage>
</organism>
<comment type="subcellular location">
    <subcellularLocation>
        <location evidence="3">Membrane</location>
        <topology evidence="3">Multi-pass membrane protein</topology>
    </subcellularLocation>
</comment>
<comment type="alternative products">
    <event type="alternative splicing"/>
    <isoform>
        <id>Q5M880-1</id>
        <name>1</name>
        <sequence type="displayed"/>
    </isoform>
    <isoform>
        <id>Q5M880-2</id>
        <name>2</name>
        <sequence type="described" ref="VSP_024150"/>
    </isoform>
</comment>
<protein>
    <recommendedName>
        <fullName evidence="3">Solute carrier family 66 member 2</fullName>
    </recommendedName>
    <alternativeName>
        <fullName>PQ-loop repeat-containing protein 1</fullName>
    </alternativeName>
</protein>
<sequence>MEAEGLGWLLVPLHQLVSWVAAGAMVFGGVVPYIPQYRDIRRTQNADGFSTHVCLVLLVANILRILFWFGRHFESPLLWQSIVMILTMLLMLKLCTEVRVANELNVKRRSFAATDSKDEELRVPPRRPYLDFDPHHFWHWSSFADYVQCVLAFTGVAGYITYLSIDSALFVETLGFLAVLTEAMLGVPQLYRNYRHRSTEGMSLKMVLMWTSGDTFKTAYFLLNGAPLQFSVCGLLQVMVDLAILGQAYAFAHHPQKPAPHAVHPASAKAL</sequence>
<feature type="chain" id="PRO_0000282432" description="Solute carrier family 66 member 2">
    <location>
        <begin position="1"/>
        <end position="271"/>
    </location>
</feature>
<feature type="transmembrane region" description="Helical" evidence="1">
    <location>
        <begin position="7"/>
        <end position="27"/>
    </location>
</feature>
<feature type="transmembrane region" description="Helical" evidence="1">
    <location>
        <begin position="49"/>
        <end position="69"/>
    </location>
</feature>
<feature type="transmembrane region" description="Helical" evidence="1">
    <location>
        <begin position="72"/>
        <end position="92"/>
    </location>
</feature>
<feature type="transmembrane region" description="Helical" evidence="1">
    <location>
        <begin position="143"/>
        <end position="163"/>
    </location>
</feature>
<feature type="transmembrane region" description="Helical" evidence="1">
    <location>
        <begin position="168"/>
        <end position="188"/>
    </location>
</feature>
<feature type="transmembrane region" description="Helical" evidence="1">
    <location>
        <begin position="232"/>
        <end position="252"/>
    </location>
</feature>
<feature type="domain" description="PQ-loop 1">
    <location>
        <begin position="14"/>
        <end position="80"/>
    </location>
</feature>
<feature type="domain" description="PQ-loop 2">
    <location>
        <begin position="149"/>
        <end position="215"/>
    </location>
</feature>
<feature type="modified residue" description="Phosphoserine" evidence="4">
    <location>
        <position position="110"/>
    </location>
</feature>
<feature type="splice variant" id="VSP_024150" description="In isoform 2." evidence="2">
    <location>
        <begin position="131"/>
        <end position="154"/>
    </location>
</feature>
<gene>
    <name type="primary">Slc66a2</name>
    <name type="synonym">Pqlc1</name>
</gene>
<proteinExistence type="evidence at protein level"/>
<dbReference type="EMBL" id="BC079072">
    <property type="status" value="NOT_ANNOTATED_CDS"/>
    <property type="molecule type" value="mRNA"/>
</dbReference>
<dbReference type="EMBL" id="BC088186">
    <property type="protein sequence ID" value="AAH88186.1"/>
    <property type="molecule type" value="mRNA"/>
</dbReference>
<dbReference type="RefSeq" id="NP_001013207.1">
    <property type="nucleotide sequence ID" value="NM_001013189.1"/>
</dbReference>
<dbReference type="RefSeq" id="XP_006255014.1">
    <molecule id="Q5M880-1"/>
    <property type="nucleotide sequence ID" value="XM_006254952.5"/>
</dbReference>
<dbReference type="RefSeq" id="XP_006255015.1">
    <molecule id="Q5M880-1"/>
    <property type="nucleotide sequence ID" value="XM_006254953.5"/>
</dbReference>
<dbReference type="RefSeq" id="XP_017456493.1">
    <molecule id="Q5M880-1"/>
    <property type="nucleotide sequence ID" value="XM_017601004.3"/>
</dbReference>
<dbReference type="SMR" id="Q5M880"/>
<dbReference type="FunCoup" id="Q5M880">
    <property type="interactions" value="574"/>
</dbReference>
<dbReference type="STRING" id="10116.ENSRNOP00000074262"/>
<dbReference type="iPTMnet" id="Q5M880"/>
<dbReference type="PhosphoSitePlus" id="Q5M880"/>
<dbReference type="PaxDb" id="10116-ENSRNOP00000023433"/>
<dbReference type="Ensembl" id="ENSRNOT00000114669.1">
    <molecule id="Q5M880-1"/>
    <property type="protein sequence ID" value="ENSRNOP00000086993.1"/>
    <property type="gene ID" value="ENSRNOG00000059215.2"/>
</dbReference>
<dbReference type="GeneID" id="361352"/>
<dbReference type="AGR" id="RGD:1305223"/>
<dbReference type="CTD" id="80148"/>
<dbReference type="RGD" id="1305223">
    <property type="gene designation" value="Slc66a2"/>
</dbReference>
<dbReference type="eggNOG" id="KOG2913">
    <property type="taxonomic scope" value="Eukaryota"/>
</dbReference>
<dbReference type="GeneTree" id="ENSGT00390000002381"/>
<dbReference type="HOGENOM" id="CLU_049047_2_0_1"/>
<dbReference type="InParanoid" id="Q5M880"/>
<dbReference type="OMA" id="FKMWFFF"/>
<dbReference type="OrthoDB" id="292213at2759"/>
<dbReference type="PhylomeDB" id="Q5M880"/>
<dbReference type="TreeFam" id="TF313072"/>
<dbReference type="PRO" id="PR:Q5M880"/>
<dbReference type="Proteomes" id="UP000002494">
    <property type="component" value="Chromosome 18"/>
</dbReference>
<dbReference type="Bgee" id="ENSRNOG00000059215">
    <property type="expression patterns" value="Expressed in liver and 20 other cell types or tissues"/>
</dbReference>
<dbReference type="GO" id="GO:0005829">
    <property type="term" value="C:cytosol"/>
    <property type="evidence" value="ECO:0007669"/>
    <property type="project" value="GOC"/>
</dbReference>
<dbReference type="GO" id="GO:0005768">
    <property type="term" value="C:endosome"/>
    <property type="evidence" value="ECO:0000318"/>
    <property type="project" value="GO_Central"/>
</dbReference>
<dbReference type="GO" id="GO:0016020">
    <property type="term" value="C:membrane"/>
    <property type="evidence" value="ECO:0007669"/>
    <property type="project" value="UniProtKB-SubCell"/>
</dbReference>
<dbReference type="GO" id="GO:0005802">
    <property type="term" value="C:trans-Golgi network"/>
    <property type="evidence" value="ECO:0000318"/>
    <property type="project" value="GO_Central"/>
</dbReference>
<dbReference type="GO" id="GO:0045332">
    <property type="term" value="P:phospholipid translocation"/>
    <property type="evidence" value="ECO:0000318"/>
    <property type="project" value="GO_Central"/>
</dbReference>
<dbReference type="GO" id="GO:0042147">
    <property type="term" value="P:retrograde transport, endosome to Golgi"/>
    <property type="evidence" value="ECO:0000318"/>
    <property type="project" value="GO_Central"/>
</dbReference>
<dbReference type="FunFam" id="1.20.1280.290:FF:000005">
    <property type="entry name" value="PQ-loop repeat-containing protein 1"/>
    <property type="match status" value="1"/>
</dbReference>
<dbReference type="FunFam" id="1.20.1280.290:FF:000008">
    <property type="entry name" value="PQ-loop repeat-containing protein 1"/>
    <property type="match status" value="1"/>
</dbReference>
<dbReference type="Gene3D" id="1.20.1280.290">
    <property type="match status" value="2"/>
</dbReference>
<dbReference type="InterPro" id="IPR006603">
    <property type="entry name" value="PQ-loop_rpt"/>
</dbReference>
<dbReference type="InterPro" id="IPR052241">
    <property type="entry name" value="SLC66/Scramblase_ANY1"/>
</dbReference>
<dbReference type="PANTHER" id="PTHR14856">
    <property type="entry name" value="PQ-LOOP REPEAT-CONTAINING PROTEIN 1-LIKE PROTEIN"/>
    <property type="match status" value="1"/>
</dbReference>
<dbReference type="PANTHER" id="PTHR14856:SF10">
    <property type="entry name" value="SOLUTE CARRIER FAMILY 66 MEMBER 2"/>
    <property type="match status" value="1"/>
</dbReference>
<dbReference type="Pfam" id="PF04193">
    <property type="entry name" value="PQ-loop"/>
    <property type="match status" value="2"/>
</dbReference>
<dbReference type="SMART" id="SM00679">
    <property type="entry name" value="CTNS"/>
    <property type="match status" value="2"/>
</dbReference>
<reference key="1">
    <citation type="journal article" date="2004" name="Genome Res.">
        <title>The status, quality, and expansion of the NIH full-length cDNA project: the Mammalian Gene Collection (MGC).</title>
        <authorList>
            <consortium name="The MGC Project Team"/>
        </authorList>
    </citation>
    <scope>NUCLEOTIDE SEQUENCE [LARGE SCALE MRNA] (ISOFORMS 1 AND 2)</scope>
    <source>
        <tissue>Liver</tissue>
        <tissue>Lung</tissue>
    </source>
</reference>
<reference key="2">
    <citation type="journal article" date="2012" name="Nat. Commun.">
        <title>Quantitative maps of protein phosphorylation sites across 14 different rat organs and tissues.</title>
        <authorList>
            <person name="Lundby A."/>
            <person name="Secher A."/>
            <person name="Lage K."/>
            <person name="Nordsborg N.B."/>
            <person name="Dmytriyev A."/>
            <person name="Lundby C."/>
            <person name="Olsen J.V."/>
        </authorList>
    </citation>
    <scope>PHOSPHORYLATION [LARGE SCALE ANALYSIS] AT SER-110</scope>
    <scope>IDENTIFICATION BY MASS SPECTROMETRY [LARGE SCALE ANALYSIS]</scope>
</reference>
<accession>Q5M880</accession>
<name>S66A2_RAT</name>
<evidence type="ECO:0000255" key="1"/>
<evidence type="ECO:0000303" key="2">
    <source>
    </source>
</evidence>
<evidence type="ECO:0000305" key="3"/>
<evidence type="ECO:0007744" key="4">
    <source>
    </source>
</evidence>
<keyword id="KW-0025">Alternative splicing</keyword>
<keyword id="KW-0472">Membrane</keyword>
<keyword id="KW-0597">Phosphoprotein</keyword>
<keyword id="KW-1185">Reference proteome</keyword>
<keyword id="KW-0677">Repeat</keyword>
<keyword id="KW-0812">Transmembrane</keyword>
<keyword id="KW-1133">Transmembrane helix</keyword>